<sequence>MSDRFCKECNNLLYPKEDDNTLFLACKNCEHIQEAKSHRLYVKNFRPKHASIELYARDLVQDPTLPSVKINCGNCGFNKGLYFQPRGGEEDVALSIFYLCCRCYHLWT</sequence>
<feature type="chain" id="PRO_0000121472" description="DNA-directed RNA polymerase II subunit RPB9">
    <location>
        <begin position="1"/>
        <end position="108"/>
    </location>
</feature>
<feature type="zinc finger region" description="C4-type" evidence="3">
    <location>
        <begin position="6"/>
        <end position="29"/>
    </location>
</feature>
<feature type="zinc finger region" description="TFIIS-type" evidence="4">
    <location>
        <begin position="68"/>
        <end position="108"/>
    </location>
</feature>
<feature type="binding site" evidence="5">
    <location>
        <position position="6"/>
    </location>
    <ligand>
        <name>Zn(2+)</name>
        <dbReference type="ChEBI" id="CHEBI:29105"/>
        <label>1</label>
    </ligand>
</feature>
<feature type="binding site" evidence="5">
    <location>
        <position position="9"/>
    </location>
    <ligand>
        <name>Zn(2+)</name>
        <dbReference type="ChEBI" id="CHEBI:29105"/>
        <label>1</label>
    </ligand>
</feature>
<feature type="binding site" evidence="5">
    <location>
        <position position="26"/>
    </location>
    <ligand>
        <name>Zn(2+)</name>
        <dbReference type="ChEBI" id="CHEBI:29105"/>
        <label>1</label>
    </ligand>
</feature>
<feature type="binding site" evidence="5">
    <location>
        <position position="29"/>
    </location>
    <ligand>
        <name>Zn(2+)</name>
        <dbReference type="ChEBI" id="CHEBI:29105"/>
        <label>1</label>
    </ligand>
</feature>
<feature type="binding site" evidence="4">
    <location>
        <position position="72"/>
    </location>
    <ligand>
        <name>Zn(2+)</name>
        <dbReference type="ChEBI" id="CHEBI:29105"/>
        <label>2</label>
    </ligand>
</feature>
<feature type="binding site" evidence="4">
    <location>
        <position position="75"/>
    </location>
    <ligand>
        <name>Zn(2+)</name>
        <dbReference type="ChEBI" id="CHEBI:29105"/>
        <label>2</label>
    </ligand>
</feature>
<feature type="binding site" evidence="4">
    <location>
        <position position="100"/>
    </location>
    <ligand>
        <name>Zn(2+)</name>
        <dbReference type="ChEBI" id="CHEBI:29105"/>
        <label>2</label>
    </ligand>
</feature>
<feature type="binding site" evidence="4">
    <location>
        <position position="103"/>
    </location>
    <ligand>
        <name>Zn(2+)</name>
        <dbReference type="ChEBI" id="CHEBI:29105"/>
        <label>2</label>
    </ligand>
</feature>
<protein>
    <recommendedName>
        <fullName>DNA-directed RNA polymerase II subunit RPB9</fullName>
        <shortName>RNA polymerase II subunit B9</shortName>
    </recommendedName>
    <alternativeName>
        <fullName>DNA-directed RNA polymerase II subunit 9</fullName>
    </alternativeName>
</protein>
<evidence type="ECO:0000250" key="1"/>
<evidence type="ECO:0000250" key="2">
    <source>
        <dbReference type="UniProtKB" id="P32529"/>
    </source>
</evidence>
<evidence type="ECO:0000255" key="3"/>
<evidence type="ECO:0000255" key="4">
    <source>
        <dbReference type="PROSITE-ProRule" id="PRU00472"/>
    </source>
</evidence>
<evidence type="ECO:0000255" key="5">
    <source>
        <dbReference type="PROSITE-ProRule" id="PRU10145"/>
    </source>
</evidence>
<evidence type="ECO:0000305" key="6"/>
<gene>
    <name type="primary">RPB9</name>
    <name type="ordered locus">ECU11_1400</name>
</gene>
<proteinExistence type="inferred from homology"/>
<dbReference type="EMBL" id="AL590450">
    <property type="protein sequence ID" value="CAD26050.1"/>
    <property type="molecule type" value="Genomic_DNA"/>
</dbReference>
<dbReference type="RefSeq" id="NP_586446.1">
    <property type="nucleotide sequence ID" value="NM_001042279.1"/>
</dbReference>
<dbReference type="SMR" id="Q8SQU1"/>
<dbReference type="FunCoup" id="Q8SQU1">
    <property type="interactions" value="103"/>
</dbReference>
<dbReference type="STRING" id="284813.Q8SQU1"/>
<dbReference type="GeneID" id="860100"/>
<dbReference type="KEGG" id="ecu:ECU11_1400"/>
<dbReference type="VEuPathDB" id="MicrosporidiaDB:ECU11_1400"/>
<dbReference type="HOGENOM" id="CLU_093932_0_1_1"/>
<dbReference type="InParanoid" id="Q8SQU1"/>
<dbReference type="OMA" id="EVADNSC"/>
<dbReference type="OrthoDB" id="282270at2759"/>
<dbReference type="Proteomes" id="UP000000819">
    <property type="component" value="Chromosome XI"/>
</dbReference>
<dbReference type="GO" id="GO:0005730">
    <property type="term" value="C:nucleolus"/>
    <property type="evidence" value="ECO:0007669"/>
    <property type="project" value="UniProtKB-SubCell"/>
</dbReference>
<dbReference type="GO" id="GO:0005665">
    <property type="term" value="C:RNA polymerase II, core complex"/>
    <property type="evidence" value="ECO:0007669"/>
    <property type="project" value="TreeGrafter"/>
</dbReference>
<dbReference type="GO" id="GO:0003899">
    <property type="term" value="F:DNA-directed RNA polymerase activity"/>
    <property type="evidence" value="ECO:0007669"/>
    <property type="project" value="InterPro"/>
</dbReference>
<dbReference type="GO" id="GO:0003676">
    <property type="term" value="F:nucleic acid binding"/>
    <property type="evidence" value="ECO:0007669"/>
    <property type="project" value="InterPro"/>
</dbReference>
<dbReference type="GO" id="GO:0008270">
    <property type="term" value="F:zinc ion binding"/>
    <property type="evidence" value="ECO:0007669"/>
    <property type="project" value="UniProtKB-KW"/>
</dbReference>
<dbReference type="GO" id="GO:0001193">
    <property type="term" value="P:maintenance of transcriptional fidelity during transcription elongation by RNA polymerase II"/>
    <property type="evidence" value="ECO:0007669"/>
    <property type="project" value="TreeGrafter"/>
</dbReference>
<dbReference type="GO" id="GO:0006367">
    <property type="term" value="P:transcription initiation at RNA polymerase II promoter"/>
    <property type="evidence" value="ECO:0007669"/>
    <property type="project" value="TreeGrafter"/>
</dbReference>
<dbReference type="GO" id="GO:0006283">
    <property type="term" value="P:transcription-coupled nucleotide-excision repair"/>
    <property type="evidence" value="ECO:0007669"/>
    <property type="project" value="TreeGrafter"/>
</dbReference>
<dbReference type="Gene3D" id="2.20.25.10">
    <property type="match status" value="2"/>
</dbReference>
<dbReference type="InterPro" id="IPR019761">
    <property type="entry name" value="DNA-dir_RNA_pol-M_15_CS"/>
</dbReference>
<dbReference type="InterPro" id="IPR012164">
    <property type="entry name" value="Rpa12/Rpb9/Rpc10/TFS"/>
</dbReference>
<dbReference type="InterPro" id="IPR001529">
    <property type="entry name" value="Zn_ribbon_RPB9"/>
</dbReference>
<dbReference type="InterPro" id="IPR001222">
    <property type="entry name" value="Znf_TFIIS"/>
</dbReference>
<dbReference type="PANTHER" id="PTHR11239">
    <property type="entry name" value="DNA-DIRECTED RNA POLYMERASE"/>
    <property type="match status" value="1"/>
</dbReference>
<dbReference type="PANTHER" id="PTHR11239:SF1">
    <property type="entry name" value="DNA-DIRECTED RNA POLYMERASE II SUBUNIT RPB9"/>
    <property type="match status" value="1"/>
</dbReference>
<dbReference type="Pfam" id="PF02150">
    <property type="entry name" value="Zn_ribbon_RPB9"/>
    <property type="match status" value="1"/>
</dbReference>
<dbReference type="Pfam" id="PF01096">
    <property type="entry name" value="Zn_ribbon_TFIIS"/>
    <property type="match status" value="1"/>
</dbReference>
<dbReference type="PIRSF" id="PIRSF005586">
    <property type="entry name" value="RNApol_RpoM"/>
    <property type="match status" value="1"/>
</dbReference>
<dbReference type="SMART" id="SM00661">
    <property type="entry name" value="RPOL9"/>
    <property type="match status" value="1"/>
</dbReference>
<dbReference type="SUPFAM" id="SSF57783">
    <property type="entry name" value="Zinc beta-ribbon"/>
    <property type="match status" value="2"/>
</dbReference>
<dbReference type="PROSITE" id="PS01030">
    <property type="entry name" value="RNA_POL_M_15KD"/>
    <property type="match status" value="1"/>
</dbReference>
<dbReference type="PROSITE" id="PS51133">
    <property type="entry name" value="ZF_TFIIS_2"/>
    <property type="match status" value="1"/>
</dbReference>
<keyword id="KW-0240">DNA-directed RNA polymerase</keyword>
<keyword id="KW-0479">Metal-binding</keyword>
<keyword id="KW-0539">Nucleus</keyword>
<keyword id="KW-1185">Reference proteome</keyword>
<keyword id="KW-0804">Transcription</keyword>
<keyword id="KW-0862">Zinc</keyword>
<keyword id="KW-0863">Zinc-finger</keyword>
<comment type="function">
    <text evidence="1">DNA-dependent RNA polymerase catalyzes the transcription of DNA into RNA using the four ribonucleoside triphosphates as substrates. Component of RNA polymerase II which synthesizes mRNA precursors and many functional non-coding RNAs. Pol II is the central component of the basal RNA polymerase II transcription machinery. It is composed of mobile elements that move relative to each other. RPB9 is part of the upper jaw surrounding the central large cleft and thought to grab the incoming DNA template. Involved in the regulation of transcription elongation (By similarity).</text>
</comment>
<comment type="subunit">
    <text evidence="1">Component of the RNA polymerase II (Pol II) complex consisting of 12 subunits.</text>
</comment>
<comment type="subcellular location">
    <subcellularLocation>
        <location evidence="2">Nucleus</location>
        <location evidence="2">Nucleolus</location>
    </subcellularLocation>
</comment>
<comment type="similarity">
    <text evidence="6">Belongs to the archaeal RpoM/eukaryotic RPA12/RPB9/RPC11 RNA polymerase family.</text>
</comment>
<reference key="1">
    <citation type="journal article" date="2001" name="Nature">
        <title>Genome sequence and gene compaction of the eukaryote parasite Encephalitozoon cuniculi.</title>
        <authorList>
            <person name="Katinka M.D."/>
            <person name="Duprat S."/>
            <person name="Cornillot E."/>
            <person name="Metenier G."/>
            <person name="Thomarat F."/>
            <person name="Prensier G."/>
            <person name="Barbe V."/>
            <person name="Peyretaillade E."/>
            <person name="Brottier P."/>
            <person name="Wincker P."/>
            <person name="Delbac F."/>
            <person name="El Alaoui H."/>
            <person name="Peyret P."/>
            <person name="Saurin W."/>
            <person name="Gouy M."/>
            <person name="Weissenbach J."/>
            <person name="Vivares C.P."/>
        </authorList>
    </citation>
    <scope>NUCLEOTIDE SEQUENCE [LARGE SCALE GENOMIC DNA]</scope>
    <source>
        <strain>GB-M1</strain>
    </source>
</reference>
<name>RPB9_ENCCU</name>
<accession>Q8SQU1</accession>
<organism>
    <name type="scientific">Encephalitozoon cuniculi (strain GB-M1)</name>
    <name type="common">Microsporidian parasite</name>
    <dbReference type="NCBI Taxonomy" id="284813"/>
    <lineage>
        <taxon>Eukaryota</taxon>
        <taxon>Fungi</taxon>
        <taxon>Fungi incertae sedis</taxon>
        <taxon>Microsporidia</taxon>
        <taxon>Unikaryonidae</taxon>
        <taxon>Encephalitozoon</taxon>
    </lineage>
</organism>